<proteinExistence type="evidence at protein level"/>
<accession>O82645</accession>
<accession>Q3E9R9</accession>
<accession>Q8W4H9</accession>
<name>IQM1_ARATH</name>
<evidence type="ECO:0000255" key="1">
    <source>
        <dbReference type="PROSITE-ProRule" id="PRU00116"/>
    </source>
</evidence>
<evidence type="ECO:0000256" key="2">
    <source>
        <dbReference type="SAM" id="MobiDB-lite"/>
    </source>
</evidence>
<evidence type="ECO:0000269" key="3">
    <source>
    </source>
</evidence>
<evidence type="ECO:0000269" key="4">
    <source>
    </source>
</evidence>
<evidence type="ECO:0000269" key="5">
    <source ref="6"/>
</evidence>
<evidence type="ECO:0000303" key="6">
    <source ref="6"/>
</evidence>
<evidence type="ECO:0000305" key="7"/>
<evidence type="ECO:0000312" key="8">
    <source>
        <dbReference type="Araport" id="AT4G33050"/>
    </source>
</evidence>
<evidence type="ECO:0000312" key="9">
    <source>
        <dbReference type="EMBL" id="AEE86164.1"/>
    </source>
</evidence>
<feature type="chain" id="PRO_0000433917" description="IQ domain-containing protein IQM1">
    <location>
        <begin position="1"/>
        <end position="488"/>
    </location>
</feature>
<feature type="domain" description="IQ" evidence="1">
    <location>
        <begin position="106"/>
        <end position="135"/>
    </location>
</feature>
<feature type="region of interest" description="Disordered" evidence="2">
    <location>
        <begin position="20"/>
        <end position="46"/>
    </location>
</feature>
<feature type="region of interest" description="Disordered" evidence="2">
    <location>
        <begin position="377"/>
        <end position="403"/>
    </location>
</feature>
<feature type="region of interest" description="Disordered" evidence="2">
    <location>
        <begin position="448"/>
        <end position="472"/>
    </location>
</feature>
<feature type="compositionally biased region" description="Polar residues" evidence="2">
    <location>
        <begin position="32"/>
        <end position="46"/>
    </location>
</feature>
<feature type="compositionally biased region" description="Basic and acidic residues" evidence="2">
    <location>
        <begin position="388"/>
        <end position="403"/>
    </location>
</feature>
<feature type="splice variant" id="VSP_057855" description="In isoform 2.">
    <original>A</original>
    <variation>AVSPHNLNIFVTSYQRQVPYLTSKAIIEYTLMIHLLKLQ</variation>
    <location>
        <position position="197"/>
    </location>
</feature>
<feature type="splice variant" id="VSP_057856" description="In isoform 2.">
    <original>AIWPYSGHYLPTEDNFKEFISFLEEHNVDLTNVKRCSVNEEYSSFKSTADEEEERKEVSEEVEIPSEKEERARPVFDPVKRLSCKWTSGYGPRIGCVRDYPMELQAQALEQVSLSPRVSPANSYGPIPSPRPSPKVRVSPRLAYMGIPSPRAVKC</original>
    <variation>VLE</variation>
    <location>
        <begin position="334"/>
        <end position="488"/>
    </location>
</feature>
<gene>
    <name evidence="6" type="primary">IQM1</name>
    <name evidence="9" type="synonym">EDA39</name>
    <name evidence="8" type="ordered locus">At4g33050</name>
</gene>
<sequence>MGLEVGSLCFKLKDGGLTSRTNSFKRDDTNRHQNSPKSTMERSLSFNSWEVPKETKTDSDFEVLETKKSTPNTLNGRNCERIQIKKPTVTPPEPFVFFSPRPVTELDAAATTLQKVYKSYRTRRNLADCAVVVEELWWRTLEGAALDLSSVSFFGEEKHETAVSKWARARKRAAKVGKGLSKDEKAQKLALQHWLEAIDPRHRYGHNLHFYYDVWSASKSTQPFFYWLDIGDGKDVNLEKHPRSVLQKQCIRYLGPMEREAYEVIVEDGRLMYKQGMTLINSTEEAKSIFVLSTTRNLYVGIKKKGLFQHSSFLSGGATTAAGRLVARDGILEAIWPYSGHYLPTEDNFKEFISFLEEHNVDLTNVKRCSVNEEYSSFKSTADEEEERKEVSEEVEIPSEKEERARPVFDPVKRLSCKWTSGYGPRIGCVRDYPMELQAQALEQVSLSPRVSPANSYGPIPSPRPSPKVRVSPRLAYMGIPSPRAVKC</sequence>
<keyword id="KW-0025">Alternative splicing</keyword>
<keyword id="KW-0963">Cytoplasm</keyword>
<keyword id="KW-0539">Nucleus</keyword>
<keyword id="KW-1185">Reference proteome</keyword>
<dbReference type="EMBL" id="AL031804">
    <property type="protein sequence ID" value="CAA21214.1"/>
    <property type="molecule type" value="Genomic_DNA"/>
</dbReference>
<dbReference type="EMBL" id="AL161582">
    <property type="protein sequence ID" value="CAB80022.1"/>
    <property type="molecule type" value="Genomic_DNA"/>
</dbReference>
<dbReference type="EMBL" id="CP002687">
    <property type="protein sequence ID" value="AEE86164.1"/>
    <property type="molecule type" value="Genomic_DNA"/>
</dbReference>
<dbReference type="EMBL" id="CP002687">
    <property type="protein sequence ID" value="AEE86165.1"/>
    <property type="molecule type" value="Genomic_DNA"/>
</dbReference>
<dbReference type="EMBL" id="AY062551">
    <property type="protein sequence ID" value="AAL32629.1"/>
    <property type="molecule type" value="mRNA"/>
</dbReference>
<dbReference type="EMBL" id="BT008453">
    <property type="protein sequence ID" value="AAP37812.1"/>
    <property type="molecule type" value="mRNA"/>
</dbReference>
<dbReference type="PIR" id="T05313">
    <property type="entry name" value="T05313"/>
</dbReference>
<dbReference type="RefSeq" id="NP_195031.2">
    <molecule id="O82645-2"/>
    <property type="nucleotide sequence ID" value="NM_119459.4"/>
</dbReference>
<dbReference type="RefSeq" id="NP_974673.2">
    <molecule id="O82645-1"/>
    <property type="nucleotide sequence ID" value="NM_202944.3"/>
</dbReference>
<dbReference type="FunCoup" id="O82645">
    <property type="interactions" value="67"/>
</dbReference>
<dbReference type="STRING" id="3702.O82645"/>
<dbReference type="iPTMnet" id="O82645"/>
<dbReference type="PaxDb" id="3702-AT4G33050.2"/>
<dbReference type="EnsemblPlants" id="AT4G33050.1">
    <molecule id="O82645-2"/>
    <property type="protein sequence ID" value="AT4G33050.1"/>
    <property type="gene ID" value="AT4G33050"/>
</dbReference>
<dbReference type="EnsemblPlants" id="AT4G33050.3">
    <molecule id="O82645-1"/>
    <property type="protein sequence ID" value="AT4G33050.3"/>
    <property type="gene ID" value="AT4G33050"/>
</dbReference>
<dbReference type="GeneID" id="829442"/>
<dbReference type="Gramene" id="AT4G33050.1">
    <molecule id="O82645-2"/>
    <property type="protein sequence ID" value="AT4G33050.1"/>
    <property type="gene ID" value="AT4G33050"/>
</dbReference>
<dbReference type="Gramene" id="AT4G33050.3">
    <molecule id="O82645-1"/>
    <property type="protein sequence ID" value="AT4G33050.3"/>
    <property type="gene ID" value="AT4G33050"/>
</dbReference>
<dbReference type="KEGG" id="ath:AT4G33050"/>
<dbReference type="Araport" id="AT4G33050"/>
<dbReference type="TAIR" id="AT4G33050">
    <property type="gene designation" value="EDA39"/>
</dbReference>
<dbReference type="eggNOG" id="ENOG502QRIN">
    <property type="taxonomic scope" value="Eukaryota"/>
</dbReference>
<dbReference type="HOGENOM" id="CLU_026344_0_1_1"/>
<dbReference type="InParanoid" id="O82645"/>
<dbReference type="OrthoDB" id="7344096at2759"/>
<dbReference type="PhylomeDB" id="O82645"/>
<dbReference type="PRO" id="PR:O82645"/>
<dbReference type="Proteomes" id="UP000006548">
    <property type="component" value="Chromosome 4"/>
</dbReference>
<dbReference type="ExpressionAtlas" id="O82645">
    <property type="expression patterns" value="baseline and differential"/>
</dbReference>
<dbReference type="GO" id="GO:0005737">
    <property type="term" value="C:cytoplasm"/>
    <property type="evidence" value="ECO:0000314"/>
    <property type="project" value="UniProtKB"/>
</dbReference>
<dbReference type="GO" id="GO:0005634">
    <property type="term" value="C:nucleus"/>
    <property type="evidence" value="ECO:0000314"/>
    <property type="project" value="UniProtKB"/>
</dbReference>
<dbReference type="GO" id="GO:0005516">
    <property type="term" value="F:calmodulin binding"/>
    <property type="evidence" value="ECO:0000353"/>
    <property type="project" value="UniProtKB"/>
</dbReference>
<dbReference type="GO" id="GO:0010119">
    <property type="term" value="P:regulation of stomatal movement"/>
    <property type="evidence" value="ECO:0000315"/>
    <property type="project" value="UniProtKB"/>
</dbReference>
<dbReference type="InterPro" id="IPR044159">
    <property type="entry name" value="IQM"/>
</dbReference>
<dbReference type="PANTHER" id="PTHR31250:SF57">
    <property type="entry name" value="IQ DOMAIN-CONTAINING PROTEIN IQM1"/>
    <property type="match status" value="1"/>
</dbReference>
<dbReference type="PANTHER" id="PTHR31250">
    <property type="entry name" value="IQ DOMAIN-CONTAINING PROTEIN IQM3"/>
    <property type="match status" value="1"/>
</dbReference>
<protein>
    <recommendedName>
        <fullName evidence="7">IQ domain-containing protein IQM1</fullName>
    </recommendedName>
    <alternativeName>
        <fullName evidence="6">IQ motif-containing protein 1</fullName>
    </alternativeName>
</protein>
<organism>
    <name type="scientific">Arabidopsis thaliana</name>
    <name type="common">Mouse-ear cress</name>
    <dbReference type="NCBI Taxonomy" id="3702"/>
    <lineage>
        <taxon>Eukaryota</taxon>
        <taxon>Viridiplantae</taxon>
        <taxon>Streptophyta</taxon>
        <taxon>Embryophyta</taxon>
        <taxon>Tracheophyta</taxon>
        <taxon>Spermatophyta</taxon>
        <taxon>Magnoliopsida</taxon>
        <taxon>eudicotyledons</taxon>
        <taxon>Gunneridae</taxon>
        <taxon>Pentapetalae</taxon>
        <taxon>rosids</taxon>
        <taxon>malvids</taxon>
        <taxon>Brassicales</taxon>
        <taxon>Brassicaceae</taxon>
        <taxon>Camelineae</taxon>
        <taxon>Arabidopsis</taxon>
    </lineage>
</organism>
<comment type="function">
    <text evidence="4">Involved in the modulation of stomatal movement. Promotes stomatal opening. May play a role in the regulation of chitin signaling. May be involved in biotic and abiotic stress responses.</text>
</comment>
<comment type="subunit">
    <text evidence="4">Interacts (via IQ domain) with CAM5.</text>
</comment>
<comment type="subcellular location">
    <subcellularLocation>
        <location evidence="4">Cytoplasm</location>
    </subcellularLocation>
    <subcellularLocation>
        <location evidence="4">Nucleus</location>
    </subcellularLocation>
</comment>
<comment type="alternative products">
    <event type="alternative splicing"/>
    <isoform>
        <id>O82645-1</id>
        <name>1</name>
        <sequence type="displayed"/>
    </isoform>
    <isoform>
        <id>O82645-2</id>
        <name>2</name>
        <sequence type="described" ref="VSP_057855 VSP_057856"/>
    </isoform>
</comment>
<comment type="tissue specificity">
    <text evidence="3 5">Highly expressed in leaf mesophyll cells (PubMed:17032064). Expressed in roots, rosette and cauline leaves, stems, flowers and siliques (Ref.6).</text>
</comment>
<comment type="induction">
    <text evidence="5">By light, cadmium and lead. Down-regulated by salt stress and treatment with mannitol.</text>
</comment>
<comment type="disruption phenotype">
    <text evidence="4">Reduced primary root length. Reduced stomatal aperture.</text>
</comment>
<reference key="1">
    <citation type="journal article" date="1999" name="Nature">
        <title>Sequence and analysis of chromosome 4 of the plant Arabidopsis thaliana.</title>
        <authorList>
            <person name="Mayer K.F.X."/>
            <person name="Schueller C."/>
            <person name="Wambutt R."/>
            <person name="Murphy G."/>
            <person name="Volckaert G."/>
            <person name="Pohl T."/>
            <person name="Duesterhoeft A."/>
            <person name="Stiekema W."/>
            <person name="Entian K.-D."/>
            <person name="Terryn N."/>
            <person name="Harris B."/>
            <person name="Ansorge W."/>
            <person name="Brandt P."/>
            <person name="Grivell L.A."/>
            <person name="Rieger M."/>
            <person name="Weichselgartner M."/>
            <person name="de Simone V."/>
            <person name="Obermaier B."/>
            <person name="Mache R."/>
            <person name="Mueller M."/>
            <person name="Kreis M."/>
            <person name="Delseny M."/>
            <person name="Puigdomenech P."/>
            <person name="Watson M."/>
            <person name="Schmidtheini T."/>
            <person name="Reichert B."/>
            <person name="Portetelle D."/>
            <person name="Perez-Alonso M."/>
            <person name="Boutry M."/>
            <person name="Bancroft I."/>
            <person name="Vos P."/>
            <person name="Hoheisel J."/>
            <person name="Zimmermann W."/>
            <person name="Wedler H."/>
            <person name="Ridley P."/>
            <person name="Langham S.-A."/>
            <person name="McCullagh B."/>
            <person name="Bilham L."/>
            <person name="Robben J."/>
            <person name="van der Schueren J."/>
            <person name="Grymonprez B."/>
            <person name="Chuang Y.-J."/>
            <person name="Vandenbussche F."/>
            <person name="Braeken M."/>
            <person name="Weltjens I."/>
            <person name="Voet M."/>
            <person name="Bastiaens I."/>
            <person name="Aert R."/>
            <person name="Defoor E."/>
            <person name="Weitzenegger T."/>
            <person name="Bothe G."/>
            <person name="Ramsperger U."/>
            <person name="Hilbert H."/>
            <person name="Braun M."/>
            <person name="Holzer E."/>
            <person name="Brandt A."/>
            <person name="Peters S."/>
            <person name="van Staveren M."/>
            <person name="Dirkse W."/>
            <person name="Mooijman P."/>
            <person name="Klein Lankhorst R."/>
            <person name="Rose M."/>
            <person name="Hauf J."/>
            <person name="Koetter P."/>
            <person name="Berneiser S."/>
            <person name="Hempel S."/>
            <person name="Feldpausch M."/>
            <person name="Lamberth S."/>
            <person name="Van den Daele H."/>
            <person name="De Keyser A."/>
            <person name="Buysshaert C."/>
            <person name="Gielen J."/>
            <person name="Villarroel R."/>
            <person name="De Clercq R."/>
            <person name="van Montagu M."/>
            <person name="Rogers J."/>
            <person name="Cronin A."/>
            <person name="Quail M.A."/>
            <person name="Bray-Allen S."/>
            <person name="Clark L."/>
            <person name="Doggett J."/>
            <person name="Hall S."/>
            <person name="Kay M."/>
            <person name="Lennard N."/>
            <person name="McLay K."/>
            <person name="Mayes R."/>
            <person name="Pettett A."/>
            <person name="Rajandream M.A."/>
            <person name="Lyne M."/>
            <person name="Benes V."/>
            <person name="Rechmann S."/>
            <person name="Borkova D."/>
            <person name="Bloecker H."/>
            <person name="Scharfe M."/>
            <person name="Grimm M."/>
            <person name="Loehnert T.-H."/>
            <person name="Dose S."/>
            <person name="de Haan M."/>
            <person name="Maarse A.C."/>
            <person name="Schaefer M."/>
            <person name="Mueller-Auer S."/>
            <person name="Gabel C."/>
            <person name="Fuchs M."/>
            <person name="Fartmann B."/>
            <person name="Granderath K."/>
            <person name="Dauner D."/>
            <person name="Herzl A."/>
            <person name="Neumann S."/>
            <person name="Argiriou A."/>
            <person name="Vitale D."/>
            <person name="Liguori R."/>
            <person name="Piravandi E."/>
            <person name="Massenet O."/>
            <person name="Quigley F."/>
            <person name="Clabauld G."/>
            <person name="Muendlein A."/>
            <person name="Felber R."/>
            <person name="Schnabl S."/>
            <person name="Hiller R."/>
            <person name="Schmidt W."/>
            <person name="Lecharny A."/>
            <person name="Aubourg S."/>
            <person name="Chefdor F."/>
            <person name="Cooke R."/>
            <person name="Berger C."/>
            <person name="Monfort A."/>
            <person name="Casacuberta E."/>
            <person name="Gibbons T."/>
            <person name="Weber N."/>
            <person name="Vandenbol M."/>
            <person name="Bargues M."/>
            <person name="Terol J."/>
            <person name="Torres A."/>
            <person name="Perez-Perez A."/>
            <person name="Purnelle B."/>
            <person name="Bent E."/>
            <person name="Johnson S."/>
            <person name="Tacon D."/>
            <person name="Jesse T."/>
            <person name="Heijnen L."/>
            <person name="Schwarz S."/>
            <person name="Scholler P."/>
            <person name="Heber S."/>
            <person name="Francs P."/>
            <person name="Bielke C."/>
            <person name="Frishman D."/>
            <person name="Haase D."/>
            <person name="Lemcke K."/>
            <person name="Mewes H.-W."/>
            <person name="Stocker S."/>
            <person name="Zaccaria P."/>
            <person name="Bevan M."/>
            <person name="Wilson R.K."/>
            <person name="de la Bastide M."/>
            <person name="Habermann K."/>
            <person name="Parnell L."/>
            <person name="Dedhia N."/>
            <person name="Gnoj L."/>
            <person name="Schutz K."/>
            <person name="Huang E."/>
            <person name="Spiegel L."/>
            <person name="Sekhon M."/>
            <person name="Murray J."/>
            <person name="Sheet P."/>
            <person name="Cordes M."/>
            <person name="Abu-Threideh J."/>
            <person name="Stoneking T."/>
            <person name="Kalicki J."/>
            <person name="Graves T."/>
            <person name="Harmon G."/>
            <person name="Edwards J."/>
            <person name="Latreille P."/>
            <person name="Courtney L."/>
            <person name="Cloud J."/>
            <person name="Abbott A."/>
            <person name="Scott K."/>
            <person name="Johnson D."/>
            <person name="Minx P."/>
            <person name="Bentley D."/>
            <person name="Fulton B."/>
            <person name="Miller N."/>
            <person name="Greco T."/>
            <person name="Kemp K."/>
            <person name="Kramer J."/>
            <person name="Fulton L."/>
            <person name="Mardis E."/>
            <person name="Dante M."/>
            <person name="Pepin K."/>
            <person name="Hillier L.W."/>
            <person name="Nelson J."/>
            <person name="Spieth J."/>
            <person name="Ryan E."/>
            <person name="Andrews S."/>
            <person name="Geisel C."/>
            <person name="Layman D."/>
            <person name="Du H."/>
            <person name="Ali J."/>
            <person name="Berghoff A."/>
            <person name="Jones K."/>
            <person name="Drone K."/>
            <person name="Cotton M."/>
            <person name="Joshu C."/>
            <person name="Antonoiu B."/>
            <person name="Zidanic M."/>
            <person name="Strong C."/>
            <person name="Sun H."/>
            <person name="Lamar B."/>
            <person name="Yordan C."/>
            <person name="Ma P."/>
            <person name="Zhong J."/>
            <person name="Preston R."/>
            <person name="Vil D."/>
            <person name="Shekher M."/>
            <person name="Matero A."/>
            <person name="Shah R."/>
            <person name="Swaby I.K."/>
            <person name="O'Shaughnessy A."/>
            <person name="Rodriguez M."/>
            <person name="Hoffman J."/>
            <person name="Till S."/>
            <person name="Granat S."/>
            <person name="Shohdy N."/>
            <person name="Hasegawa A."/>
            <person name="Hameed A."/>
            <person name="Lodhi M."/>
            <person name="Johnson A."/>
            <person name="Chen E."/>
            <person name="Marra M.A."/>
            <person name="Martienssen R."/>
            <person name="McCombie W.R."/>
        </authorList>
    </citation>
    <scope>NUCLEOTIDE SEQUENCE [LARGE SCALE GENOMIC DNA]</scope>
    <source>
        <strain>cv. Columbia</strain>
    </source>
</reference>
<reference key="2">
    <citation type="journal article" date="2017" name="Plant J.">
        <title>Araport11: a complete reannotation of the Arabidopsis thaliana reference genome.</title>
        <authorList>
            <person name="Cheng C.Y."/>
            <person name="Krishnakumar V."/>
            <person name="Chan A.P."/>
            <person name="Thibaud-Nissen F."/>
            <person name="Schobel S."/>
            <person name="Town C.D."/>
        </authorList>
    </citation>
    <scope>GENOME REANNOTATION</scope>
    <source>
        <strain>cv. Columbia</strain>
    </source>
</reference>
<reference key="3">
    <citation type="journal article" date="2003" name="Science">
        <title>Empirical analysis of transcriptional activity in the Arabidopsis genome.</title>
        <authorList>
            <person name="Yamada K."/>
            <person name="Lim J."/>
            <person name="Dale J.M."/>
            <person name="Chen H."/>
            <person name="Shinn P."/>
            <person name="Palm C.J."/>
            <person name="Southwick A.M."/>
            <person name="Wu H.C."/>
            <person name="Kim C.J."/>
            <person name="Nguyen M."/>
            <person name="Pham P.K."/>
            <person name="Cheuk R.F."/>
            <person name="Karlin-Newmann G."/>
            <person name="Liu S.X."/>
            <person name="Lam B."/>
            <person name="Sakano H."/>
            <person name="Wu T."/>
            <person name="Yu G."/>
            <person name="Miranda M."/>
            <person name="Quach H.L."/>
            <person name="Tripp M."/>
            <person name="Chang C.H."/>
            <person name="Lee J.M."/>
            <person name="Toriumi M.J."/>
            <person name="Chan M.M."/>
            <person name="Tang C.C."/>
            <person name="Onodera C.S."/>
            <person name="Deng J.M."/>
            <person name="Akiyama K."/>
            <person name="Ansari Y."/>
            <person name="Arakawa T."/>
            <person name="Banh J."/>
            <person name="Banno F."/>
            <person name="Bowser L."/>
            <person name="Brooks S.Y."/>
            <person name="Carninci P."/>
            <person name="Chao Q."/>
            <person name="Choy N."/>
            <person name="Enju A."/>
            <person name="Goldsmith A.D."/>
            <person name="Gurjal M."/>
            <person name="Hansen N.F."/>
            <person name="Hayashizaki Y."/>
            <person name="Johnson-Hopson C."/>
            <person name="Hsuan V.W."/>
            <person name="Iida K."/>
            <person name="Karnes M."/>
            <person name="Khan S."/>
            <person name="Koesema E."/>
            <person name="Ishida J."/>
            <person name="Jiang P.X."/>
            <person name="Jones T."/>
            <person name="Kawai J."/>
            <person name="Kamiya A."/>
            <person name="Meyers C."/>
            <person name="Nakajima M."/>
            <person name="Narusaka M."/>
            <person name="Seki M."/>
            <person name="Sakurai T."/>
            <person name="Satou M."/>
            <person name="Tamse R."/>
            <person name="Vaysberg M."/>
            <person name="Wallender E.K."/>
            <person name="Wong C."/>
            <person name="Yamamura Y."/>
            <person name="Yuan S."/>
            <person name="Shinozaki K."/>
            <person name="Davis R.W."/>
            <person name="Theologis A."/>
            <person name="Ecker J.R."/>
        </authorList>
    </citation>
    <scope>NUCLEOTIDE SEQUENCE [LARGE SCALE MRNA] (ISOFORM 2)</scope>
    <source>
        <strain>cv. Columbia</strain>
    </source>
</reference>
<reference key="4">
    <citation type="journal article" date="2006" name="PLoS Biol.">
        <title>CDPKs CPK6 and CPK3 function in ABA regulation of guard cell S-type anion- and Ca(2+)-permeable channels and stomatal closure.</title>
        <authorList>
            <person name="Mori I.C."/>
            <person name="Murata Y."/>
            <person name="Yang Y."/>
            <person name="Munemasa S."/>
            <person name="Wang Y.-F."/>
            <person name="Andreoli S."/>
            <person name="Tiriac H."/>
            <person name="Alonso J.M."/>
            <person name="Harper J.F."/>
            <person name="Ecker J.R."/>
            <person name="Kwak J.M."/>
            <person name="Schroeder J.I."/>
        </authorList>
    </citation>
    <scope>TISSUE SPECIFICITY</scope>
</reference>
<reference key="5">
    <citation type="journal article" date="2009" name="Plant Physiol.">
        <title>Large-scale Arabidopsis phosphoproteome profiling reveals novel chloroplast kinase substrates and phosphorylation networks.</title>
        <authorList>
            <person name="Reiland S."/>
            <person name="Messerli G."/>
            <person name="Baerenfaller K."/>
            <person name="Gerrits B."/>
            <person name="Endler A."/>
            <person name="Grossmann J."/>
            <person name="Gruissem W."/>
            <person name="Baginsky S."/>
        </authorList>
    </citation>
    <scope>IDENTIFICATION BY MASS SPECTROMETRY [LARGE SCALE ANALYSIS]</scope>
</reference>
<reference key="6">
    <citation type="journal article" date="2010" name="Acta Physiol. Plant.">
        <title>Sequence and expression analysis of the Arabidopsis IQM family.</title>
        <authorList>
            <person name="Zhou Y."/>
            <person name="Chen Y."/>
            <person name="Yamamoto K.T."/>
            <person name="Duan J."/>
            <person name="Tian C."/>
        </authorList>
    </citation>
    <scope>GENE FAMILY</scope>
    <scope>NOMENCLATURE</scope>
    <scope>TISSUE SPECIFICITY</scope>
    <scope>INDUCTION</scope>
</reference>
<reference key="7">
    <citation type="journal article" date="2012" name="Plant Mol. Biol.">
        <title>AtIQM1, a novel calmodulin-binding protein, is involved in stomatal movement in Arabidopsis.</title>
        <authorList>
            <person name="Zhou Y.P."/>
            <person name="Duan J."/>
            <person name="Fujibe T."/>
            <person name="Yamamoto K.T."/>
            <person name="Tian C.E."/>
        </authorList>
    </citation>
    <scope>FUNCTION</scope>
    <scope>INTERACTION WITH CAM5</scope>
    <scope>SUBCELLULAR LOCATION</scope>
    <scope>DISRUPTION PHENOTYPE</scope>
</reference>